<keyword id="KW-0647">Proteasome</keyword>
<keyword id="KW-1185">Reference proteome</keyword>
<reference key="1">
    <citation type="submission" date="2006-10" db="EMBL/GenBank/DDBJ databases">
        <authorList>
            <person name="Fleischmann R.D."/>
            <person name="Dodson R.J."/>
            <person name="Haft D.H."/>
            <person name="Merkel J.S."/>
            <person name="Nelson W.C."/>
            <person name="Fraser C.M."/>
        </authorList>
    </citation>
    <scope>NUCLEOTIDE SEQUENCE [LARGE SCALE GENOMIC DNA]</scope>
    <source>
        <strain>ATCC 700084 / mc(2)155</strain>
    </source>
</reference>
<reference key="2">
    <citation type="journal article" date="2007" name="Genome Biol.">
        <title>Interrupted coding sequences in Mycobacterium smegmatis: authentic mutations or sequencing errors?</title>
        <authorList>
            <person name="Deshayes C."/>
            <person name="Perrodou E."/>
            <person name="Gallien S."/>
            <person name="Euphrasie D."/>
            <person name="Schaeffer C."/>
            <person name="Van-Dorsselaer A."/>
            <person name="Poch O."/>
            <person name="Lecompte O."/>
            <person name="Reyrat J.-M."/>
        </authorList>
    </citation>
    <scope>NUCLEOTIDE SEQUENCE [LARGE SCALE GENOMIC DNA]</scope>
    <source>
        <strain>ATCC 700084 / mc(2)155</strain>
    </source>
</reference>
<reference key="3">
    <citation type="journal article" date="2009" name="Genome Res.">
        <title>Ortho-proteogenomics: multiple proteomes investigation through orthology and a new MS-based protocol.</title>
        <authorList>
            <person name="Gallien S."/>
            <person name="Perrodou E."/>
            <person name="Carapito C."/>
            <person name="Deshayes C."/>
            <person name="Reyrat J.-M."/>
            <person name="Van Dorsselaer A."/>
            <person name="Poch O."/>
            <person name="Schaeffer C."/>
            <person name="Lecompte O."/>
        </authorList>
    </citation>
    <scope>NUCLEOTIDE SEQUENCE [LARGE SCALE GENOMIC DNA]</scope>
    <source>
        <strain>ATCC 700084 / mc(2)155</strain>
    </source>
</reference>
<reference key="4">
    <citation type="journal article" date="2014" name="PLoS ONE">
        <title>Bacterial proteasome activator Bpa (Rv3780) is a novel ring-shaped interactor of the mycobacterial proteasome.</title>
        <authorList>
            <person name="Delley C.L."/>
            <person name="Laederach J."/>
            <person name="Ziemski M."/>
            <person name="Bolten M."/>
            <person name="Boehringer D."/>
            <person name="Weber-Ban E."/>
        </authorList>
    </citation>
    <scope>FUNCTION</scope>
    <scope>INTERACTION WITH THE PROTEASOME SUBUNIT ALPHA PRCA</scope>
    <scope>MUTAGENESIS OF 172-GLY--LEU-175</scope>
    <source>
        <strain>ATCC 700084 / mc(2)155</strain>
    </source>
</reference>
<comment type="function">
    <text evidence="1 3">Interacts with the core proteasome alpha-subunit (PrcA) through its C-terminal hydrophobic-tyrosine-X motif (HbYX motif) (PubMed:25469515). Interaction of Bpa with the proteasome stimulates proteasomal peptidase and casein degradation activity, which suggests Bpa could play a role in the removal of non-native or damaged proteins by influencing the conformation of the proteasome complex upon interaction (By similarity).</text>
</comment>
<comment type="subunit">
    <text evidence="1">Forms a homooligomeric, either hexameric or heptameric, ring-like structure which stacks co-axially with the proteasomal alpha-rings.</text>
</comment>
<comment type="similarity">
    <text evidence="5">Belongs to the Bpa family.</text>
</comment>
<proteinExistence type="evidence at protein level"/>
<feature type="chain" id="PRO_0000434132" description="Bacterial proteasome activator">
    <location>
        <begin position="1"/>
        <end position="175"/>
    </location>
</feature>
<feature type="region of interest" description="Disordered" evidence="2">
    <location>
        <begin position="152"/>
        <end position="175"/>
    </location>
</feature>
<feature type="short sequence motif" description="HbYX motif" evidence="1">
    <location>
        <begin position="173"/>
        <end position="175"/>
    </location>
</feature>
<feature type="mutagenesis site" description="Loss of interaction with the proteasome subunit PrcA." evidence="3">
    <location>
        <begin position="172"/>
        <end position="175"/>
    </location>
</feature>
<protein>
    <recommendedName>
        <fullName evidence="4">Bacterial proteasome activator</fullName>
    </recommendedName>
</protein>
<evidence type="ECO:0000250" key="1">
    <source>
        <dbReference type="UniProtKB" id="P9WKX3"/>
    </source>
</evidence>
<evidence type="ECO:0000256" key="2">
    <source>
        <dbReference type="SAM" id="MobiDB-lite"/>
    </source>
</evidence>
<evidence type="ECO:0000269" key="3">
    <source>
    </source>
</evidence>
<evidence type="ECO:0000303" key="4">
    <source>
    </source>
</evidence>
<evidence type="ECO:0000305" key="5"/>
<evidence type="ECO:0000312" key="6">
    <source>
        <dbReference type="EMBL" id="ABK74607.1"/>
    </source>
</evidence>
<evidence type="ECO:0000312" key="7">
    <source>
        <dbReference type="EMBL" id="AFP42623.1"/>
    </source>
</evidence>
<gene>
    <name evidence="4" type="primary">bpa</name>
    <name evidence="6" type="ordered locus">MSMEG_6365</name>
    <name evidence="7" type="ordered locus">MSMEI_6197</name>
</gene>
<name>BPA_MYCS2</name>
<accession>A0R5Z0</accession>
<organism>
    <name type="scientific">Mycolicibacterium smegmatis (strain ATCC 700084 / mc(2)155)</name>
    <name type="common">Mycobacterium smegmatis</name>
    <dbReference type="NCBI Taxonomy" id="246196"/>
    <lineage>
        <taxon>Bacteria</taxon>
        <taxon>Bacillati</taxon>
        <taxon>Actinomycetota</taxon>
        <taxon>Actinomycetes</taxon>
        <taxon>Mycobacteriales</taxon>
        <taxon>Mycobacteriaceae</taxon>
        <taxon>Mycolicibacterium</taxon>
    </lineage>
</organism>
<dbReference type="EMBL" id="CP000480">
    <property type="protein sequence ID" value="ABK74607.1"/>
    <property type="molecule type" value="Genomic_DNA"/>
</dbReference>
<dbReference type="EMBL" id="CP001663">
    <property type="protein sequence ID" value="AFP42623.1"/>
    <property type="molecule type" value="Genomic_DNA"/>
</dbReference>
<dbReference type="RefSeq" id="WP_011731234.1">
    <property type="nucleotide sequence ID" value="NZ_SIJM01000013.1"/>
</dbReference>
<dbReference type="RefSeq" id="YP_890578.1">
    <property type="nucleotide sequence ID" value="NC_008596.1"/>
</dbReference>
<dbReference type="SMR" id="A0R5Z0"/>
<dbReference type="STRING" id="246196.MSMEG_6365"/>
<dbReference type="PaxDb" id="246196-MSMEI_6197"/>
<dbReference type="KEGG" id="msb:LJ00_31460"/>
<dbReference type="KEGG" id="msg:MSMEI_6197"/>
<dbReference type="KEGG" id="msm:MSMEG_6365"/>
<dbReference type="PATRIC" id="fig|246196.19.peg.6193"/>
<dbReference type="eggNOG" id="ENOG502ZPJ4">
    <property type="taxonomic scope" value="Bacteria"/>
</dbReference>
<dbReference type="OrthoDB" id="5189298at2"/>
<dbReference type="Proteomes" id="UP000000757">
    <property type="component" value="Chromosome"/>
</dbReference>
<dbReference type="Proteomes" id="UP000006158">
    <property type="component" value="Chromosome"/>
</dbReference>
<dbReference type="GO" id="GO:0000502">
    <property type="term" value="C:proteasome complex"/>
    <property type="evidence" value="ECO:0007669"/>
    <property type="project" value="UniProtKB-KW"/>
</dbReference>
<dbReference type="GO" id="GO:0070628">
    <property type="term" value="F:proteasome binding"/>
    <property type="evidence" value="ECO:0000314"/>
    <property type="project" value="UniProtKB"/>
</dbReference>
<dbReference type="GO" id="GO:0061136">
    <property type="term" value="P:regulation of proteasomal protein catabolic process"/>
    <property type="evidence" value="ECO:0007669"/>
    <property type="project" value="InterPro"/>
</dbReference>
<dbReference type="InterPro" id="IPR019695">
    <property type="entry name" value="Proteasome_act"/>
</dbReference>
<dbReference type="Pfam" id="PF10759">
    <property type="entry name" value="BPA"/>
    <property type="match status" value="1"/>
</dbReference>
<sequence>MTINPDDDNIEILTGAAGGADTEGEGEGEGKSLTDLVEQPAKVMRIGTMIKQLLEEVRAAPLDDASRNRLREIHQTSIRELEDGLAPELREELERLTLPFTDDNVPSDAELRIAQAQLVGWLEGLFHGIQTALFAQQMAARAQLEQMRQGALPPGIQVPGAQRGGATHPGTGQYL</sequence>